<protein>
    <recommendedName>
        <fullName evidence="1">UDP-N-acetylenolpyruvoylglucosamine reductase</fullName>
        <ecNumber evidence="1">1.3.1.98</ecNumber>
    </recommendedName>
    <alternativeName>
        <fullName evidence="1">UDP-N-acetylmuramate dehydrogenase</fullName>
    </alternativeName>
</protein>
<sequence>MDKENFTRLRGELFCDHPLARYTSWRVGGKAERFYRPADLFDLQDFLTQLPSDEPLTWLGLGSNVLIRDGGIKGTVILTLNRLKELSVVNSQLVFREKSGTEDFFSGNGKTIIRAEAGVTCAKLAKFCVSQGLEDGAFFAGIPGTVGGALAMNAGAFGGETWRTVIGVETMNHQGEILKRTPDEFKIHYRQVEGLENQFFIAGYFCFNHGDPDKAKTAINALLKKRNLSQPIGKYSCGSVFRNPPGDYAARLIESAGLKGKSIGNAEVSEKHANFILNKGNASAADIEALIHYVAQHVSQIHGIQLVKEVNIIGRS</sequence>
<feature type="chain" id="PRO_1000191419" description="UDP-N-acetylenolpyruvoylglucosamine reductase">
    <location>
        <begin position="1"/>
        <end position="316"/>
    </location>
</feature>
<feature type="domain" description="FAD-binding PCMH-type" evidence="1">
    <location>
        <begin position="27"/>
        <end position="225"/>
    </location>
</feature>
<feature type="active site" evidence="1">
    <location>
        <position position="190"/>
    </location>
</feature>
<feature type="active site" description="Proton donor" evidence="1">
    <location>
        <position position="239"/>
    </location>
</feature>
<feature type="active site" evidence="1">
    <location>
        <position position="309"/>
    </location>
</feature>
<dbReference type="EC" id="1.3.1.98" evidence="1"/>
<dbReference type="EMBL" id="CP001019">
    <property type="protein sequence ID" value="ACJ19128.1"/>
    <property type="molecule type" value="Genomic_DNA"/>
</dbReference>
<dbReference type="RefSeq" id="WP_012570461.1">
    <property type="nucleotide sequence ID" value="NC_011527.1"/>
</dbReference>
<dbReference type="SMR" id="B6J2Q1"/>
<dbReference type="KEGG" id="cbg:CbuG_1879"/>
<dbReference type="HOGENOM" id="CLU_035304_1_0_6"/>
<dbReference type="UniPathway" id="UPA00219"/>
<dbReference type="GO" id="GO:0005829">
    <property type="term" value="C:cytosol"/>
    <property type="evidence" value="ECO:0007669"/>
    <property type="project" value="TreeGrafter"/>
</dbReference>
<dbReference type="GO" id="GO:0071949">
    <property type="term" value="F:FAD binding"/>
    <property type="evidence" value="ECO:0007669"/>
    <property type="project" value="InterPro"/>
</dbReference>
<dbReference type="GO" id="GO:0008762">
    <property type="term" value="F:UDP-N-acetylmuramate dehydrogenase activity"/>
    <property type="evidence" value="ECO:0007669"/>
    <property type="project" value="UniProtKB-UniRule"/>
</dbReference>
<dbReference type="GO" id="GO:0051301">
    <property type="term" value="P:cell division"/>
    <property type="evidence" value="ECO:0007669"/>
    <property type="project" value="UniProtKB-KW"/>
</dbReference>
<dbReference type="GO" id="GO:0071555">
    <property type="term" value="P:cell wall organization"/>
    <property type="evidence" value="ECO:0007669"/>
    <property type="project" value="UniProtKB-KW"/>
</dbReference>
<dbReference type="GO" id="GO:0009252">
    <property type="term" value="P:peptidoglycan biosynthetic process"/>
    <property type="evidence" value="ECO:0007669"/>
    <property type="project" value="UniProtKB-UniRule"/>
</dbReference>
<dbReference type="GO" id="GO:0008360">
    <property type="term" value="P:regulation of cell shape"/>
    <property type="evidence" value="ECO:0007669"/>
    <property type="project" value="UniProtKB-KW"/>
</dbReference>
<dbReference type="Gene3D" id="3.30.465.10">
    <property type="match status" value="1"/>
</dbReference>
<dbReference type="Gene3D" id="3.90.78.10">
    <property type="entry name" value="UDP-N-acetylenolpyruvoylglucosamine reductase, C-terminal domain"/>
    <property type="match status" value="1"/>
</dbReference>
<dbReference type="Gene3D" id="3.30.43.10">
    <property type="entry name" value="Uridine Diphospho-n-acetylenolpyruvylglucosamine Reductase, domain 2"/>
    <property type="match status" value="1"/>
</dbReference>
<dbReference type="HAMAP" id="MF_00037">
    <property type="entry name" value="MurB"/>
    <property type="match status" value="1"/>
</dbReference>
<dbReference type="InterPro" id="IPR016166">
    <property type="entry name" value="FAD-bd_PCMH"/>
</dbReference>
<dbReference type="InterPro" id="IPR036318">
    <property type="entry name" value="FAD-bd_PCMH-like_sf"/>
</dbReference>
<dbReference type="InterPro" id="IPR016167">
    <property type="entry name" value="FAD-bd_PCMH_sub1"/>
</dbReference>
<dbReference type="InterPro" id="IPR016169">
    <property type="entry name" value="FAD-bd_PCMH_sub2"/>
</dbReference>
<dbReference type="InterPro" id="IPR003170">
    <property type="entry name" value="MurB"/>
</dbReference>
<dbReference type="InterPro" id="IPR011601">
    <property type="entry name" value="MurB_C"/>
</dbReference>
<dbReference type="InterPro" id="IPR036635">
    <property type="entry name" value="MurB_C_sf"/>
</dbReference>
<dbReference type="InterPro" id="IPR006094">
    <property type="entry name" value="Oxid_FAD_bind_N"/>
</dbReference>
<dbReference type="NCBIfam" id="TIGR00179">
    <property type="entry name" value="murB"/>
    <property type="match status" value="1"/>
</dbReference>
<dbReference type="NCBIfam" id="NF010480">
    <property type="entry name" value="PRK13905.1"/>
    <property type="match status" value="1"/>
</dbReference>
<dbReference type="PANTHER" id="PTHR21071">
    <property type="entry name" value="UDP-N-ACETYLENOLPYRUVOYLGLUCOSAMINE REDUCTASE"/>
    <property type="match status" value="1"/>
</dbReference>
<dbReference type="PANTHER" id="PTHR21071:SF4">
    <property type="entry name" value="UDP-N-ACETYLENOLPYRUVOYLGLUCOSAMINE REDUCTASE"/>
    <property type="match status" value="1"/>
</dbReference>
<dbReference type="Pfam" id="PF01565">
    <property type="entry name" value="FAD_binding_4"/>
    <property type="match status" value="1"/>
</dbReference>
<dbReference type="Pfam" id="PF02873">
    <property type="entry name" value="MurB_C"/>
    <property type="match status" value="1"/>
</dbReference>
<dbReference type="SUPFAM" id="SSF56176">
    <property type="entry name" value="FAD-binding/transporter-associated domain-like"/>
    <property type="match status" value="1"/>
</dbReference>
<dbReference type="SUPFAM" id="SSF56194">
    <property type="entry name" value="Uridine diphospho-N-Acetylenolpyruvylglucosamine reductase, MurB, C-terminal domain"/>
    <property type="match status" value="1"/>
</dbReference>
<dbReference type="PROSITE" id="PS51387">
    <property type="entry name" value="FAD_PCMH"/>
    <property type="match status" value="1"/>
</dbReference>
<name>MURB_COXB2</name>
<proteinExistence type="inferred from homology"/>
<organism>
    <name type="scientific">Coxiella burnetii (strain CbuG_Q212)</name>
    <name type="common">Coxiella burnetii (strain Q212)</name>
    <dbReference type="NCBI Taxonomy" id="434923"/>
    <lineage>
        <taxon>Bacteria</taxon>
        <taxon>Pseudomonadati</taxon>
        <taxon>Pseudomonadota</taxon>
        <taxon>Gammaproteobacteria</taxon>
        <taxon>Legionellales</taxon>
        <taxon>Coxiellaceae</taxon>
        <taxon>Coxiella</taxon>
    </lineage>
</organism>
<keyword id="KW-0131">Cell cycle</keyword>
<keyword id="KW-0132">Cell division</keyword>
<keyword id="KW-0133">Cell shape</keyword>
<keyword id="KW-0961">Cell wall biogenesis/degradation</keyword>
<keyword id="KW-0963">Cytoplasm</keyword>
<keyword id="KW-0274">FAD</keyword>
<keyword id="KW-0285">Flavoprotein</keyword>
<keyword id="KW-0521">NADP</keyword>
<keyword id="KW-0560">Oxidoreductase</keyword>
<keyword id="KW-0573">Peptidoglycan synthesis</keyword>
<accession>B6J2Q1</accession>
<evidence type="ECO:0000255" key="1">
    <source>
        <dbReference type="HAMAP-Rule" id="MF_00037"/>
    </source>
</evidence>
<gene>
    <name evidence="1" type="primary">murB</name>
    <name type="ordered locus">CbuG_1879</name>
</gene>
<reference key="1">
    <citation type="journal article" date="2009" name="Infect. Immun.">
        <title>Comparative genomics reveal extensive transposon-mediated genomic plasticity and diversity among potential effector proteins within the genus Coxiella.</title>
        <authorList>
            <person name="Beare P.A."/>
            <person name="Unsworth N."/>
            <person name="Andoh M."/>
            <person name="Voth D.E."/>
            <person name="Omsland A."/>
            <person name="Gilk S.D."/>
            <person name="Williams K.P."/>
            <person name="Sobral B.W."/>
            <person name="Kupko J.J. III"/>
            <person name="Porcella S.F."/>
            <person name="Samuel J.E."/>
            <person name="Heinzen R.A."/>
        </authorList>
    </citation>
    <scope>NUCLEOTIDE SEQUENCE [LARGE SCALE GENOMIC DNA]</scope>
    <source>
        <strain>CbuG_Q212</strain>
    </source>
</reference>
<comment type="function">
    <text evidence="1">Cell wall formation.</text>
</comment>
<comment type="catalytic activity">
    <reaction evidence="1">
        <text>UDP-N-acetyl-alpha-D-muramate + NADP(+) = UDP-N-acetyl-3-O-(1-carboxyvinyl)-alpha-D-glucosamine + NADPH + H(+)</text>
        <dbReference type="Rhea" id="RHEA:12248"/>
        <dbReference type="ChEBI" id="CHEBI:15378"/>
        <dbReference type="ChEBI" id="CHEBI:57783"/>
        <dbReference type="ChEBI" id="CHEBI:58349"/>
        <dbReference type="ChEBI" id="CHEBI:68483"/>
        <dbReference type="ChEBI" id="CHEBI:70757"/>
        <dbReference type="EC" id="1.3.1.98"/>
    </reaction>
</comment>
<comment type="cofactor">
    <cofactor evidence="1">
        <name>FAD</name>
        <dbReference type="ChEBI" id="CHEBI:57692"/>
    </cofactor>
</comment>
<comment type="pathway">
    <text evidence="1">Cell wall biogenesis; peptidoglycan biosynthesis.</text>
</comment>
<comment type="subcellular location">
    <subcellularLocation>
        <location evidence="1">Cytoplasm</location>
    </subcellularLocation>
</comment>
<comment type="similarity">
    <text evidence="1">Belongs to the MurB family.</text>
</comment>